<reference key="1">
    <citation type="journal article" date="2008" name="J. Bacteriol.">
        <title>Insights into the environmental resistance gene pool from the genome sequence of the multidrug-resistant environmental isolate Escherichia coli SMS-3-5.</title>
        <authorList>
            <person name="Fricke W.F."/>
            <person name="Wright M.S."/>
            <person name="Lindell A.H."/>
            <person name="Harkins D.M."/>
            <person name="Baker-Austin C."/>
            <person name="Ravel J."/>
            <person name="Stepanauskas R."/>
        </authorList>
    </citation>
    <scope>NUCLEOTIDE SEQUENCE [LARGE SCALE GENOMIC DNA]</scope>
    <source>
        <strain>SMS-3-5 / SECEC</strain>
    </source>
</reference>
<organism>
    <name type="scientific">Escherichia coli (strain SMS-3-5 / SECEC)</name>
    <dbReference type="NCBI Taxonomy" id="439855"/>
    <lineage>
        <taxon>Bacteria</taxon>
        <taxon>Pseudomonadati</taxon>
        <taxon>Pseudomonadota</taxon>
        <taxon>Gammaproteobacteria</taxon>
        <taxon>Enterobacterales</taxon>
        <taxon>Enterobacteriaceae</taxon>
        <taxon>Escherichia</taxon>
    </lineage>
</organism>
<name>RNC_ECOSM</name>
<evidence type="ECO:0000255" key="1">
    <source>
        <dbReference type="HAMAP-Rule" id="MF_00104"/>
    </source>
</evidence>
<proteinExistence type="inferred from homology"/>
<feature type="chain" id="PRO_1000194422" description="Ribonuclease 3">
    <location>
        <begin position="1"/>
        <end position="226"/>
    </location>
</feature>
<feature type="domain" description="RNase III" evidence="1">
    <location>
        <begin position="6"/>
        <end position="128"/>
    </location>
</feature>
<feature type="domain" description="DRBM" evidence="1">
    <location>
        <begin position="155"/>
        <end position="225"/>
    </location>
</feature>
<feature type="active site" evidence="1">
    <location>
        <position position="45"/>
    </location>
</feature>
<feature type="active site" evidence="1">
    <location>
        <position position="117"/>
    </location>
</feature>
<feature type="binding site" evidence="1">
    <location>
        <position position="41"/>
    </location>
    <ligand>
        <name>Mg(2+)</name>
        <dbReference type="ChEBI" id="CHEBI:18420"/>
    </ligand>
</feature>
<feature type="binding site" evidence="1">
    <location>
        <position position="114"/>
    </location>
    <ligand>
        <name>Mg(2+)</name>
        <dbReference type="ChEBI" id="CHEBI:18420"/>
    </ligand>
</feature>
<feature type="binding site" evidence="1">
    <location>
        <position position="117"/>
    </location>
    <ligand>
        <name>Mg(2+)</name>
        <dbReference type="ChEBI" id="CHEBI:18420"/>
    </ligand>
</feature>
<keyword id="KW-0963">Cytoplasm</keyword>
<keyword id="KW-0255">Endonuclease</keyword>
<keyword id="KW-0378">Hydrolase</keyword>
<keyword id="KW-0460">Magnesium</keyword>
<keyword id="KW-0479">Metal-binding</keyword>
<keyword id="KW-0507">mRNA processing</keyword>
<keyword id="KW-0540">Nuclease</keyword>
<keyword id="KW-0694">RNA-binding</keyword>
<keyword id="KW-0698">rRNA processing</keyword>
<keyword id="KW-0699">rRNA-binding</keyword>
<keyword id="KW-0819">tRNA processing</keyword>
<comment type="function">
    <text evidence="1">Digests double-stranded RNA. Involved in the processing of primary rRNA transcript to yield the immediate precursors to the large and small rRNAs (23S and 16S). Processes some mRNAs, and tRNAs when they are encoded in the rRNA operon. Processes pre-crRNA and tracrRNA of type II CRISPR loci if present in the organism.</text>
</comment>
<comment type="catalytic activity">
    <reaction evidence="1">
        <text>Endonucleolytic cleavage to 5'-phosphomonoester.</text>
        <dbReference type="EC" id="3.1.26.3"/>
    </reaction>
</comment>
<comment type="cofactor">
    <cofactor evidence="1">
        <name>Mg(2+)</name>
        <dbReference type="ChEBI" id="CHEBI:18420"/>
    </cofactor>
</comment>
<comment type="subunit">
    <text evidence="1">Homodimer.</text>
</comment>
<comment type="subcellular location">
    <subcellularLocation>
        <location evidence="1">Cytoplasm</location>
    </subcellularLocation>
</comment>
<comment type="similarity">
    <text evidence="1">Belongs to the ribonuclease III family.</text>
</comment>
<sequence length="226" mass="25550">MNPIVINRLQRKLGYTFNHQELLQQALTHRSASSKHNERLEFLGDSILSYVIANALYHRFPRVDEGDMSRMRATLVRGNTLAELAREFELGECLRLGPGELKSGGFRRESILADTVEALIGGVFLDSDIQTVEKLILNWYQTRLDEISPGDKQKDPKTRLQEYLQGRHLPLPTYLVVQVRGEAHDQEFTIHCQVSGLSEPVVGTGSSRRKAEQAAAEQALKKLELE</sequence>
<protein>
    <recommendedName>
        <fullName evidence="1">Ribonuclease 3</fullName>
        <ecNumber evidence="1">3.1.26.3</ecNumber>
    </recommendedName>
    <alternativeName>
        <fullName evidence="1">Ribonuclease III</fullName>
        <shortName evidence="1">RNase III</shortName>
    </alternativeName>
</protein>
<accession>B1LP80</accession>
<dbReference type="EC" id="3.1.26.3" evidence="1"/>
<dbReference type="EMBL" id="CP000970">
    <property type="protein sequence ID" value="ACB16793.1"/>
    <property type="molecule type" value="Genomic_DNA"/>
</dbReference>
<dbReference type="RefSeq" id="WP_001068343.1">
    <property type="nucleotide sequence ID" value="NC_010498.1"/>
</dbReference>
<dbReference type="SMR" id="B1LP80"/>
<dbReference type="GeneID" id="93774524"/>
<dbReference type="KEGG" id="ecm:EcSMS35_2720"/>
<dbReference type="HOGENOM" id="CLU_000907_1_1_6"/>
<dbReference type="Proteomes" id="UP000007011">
    <property type="component" value="Chromosome"/>
</dbReference>
<dbReference type="GO" id="GO:0005737">
    <property type="term" value="C:cytoplasm"/>
    <property type="evidence" value="ECO:0007669"/>
    <property type="project" value="UniProtKB-SubCell"/>
</dbReference>
<dbReference type="GO" id="GO:0003725">
    <property type="term" value="F:double-stranded RNA binding"/>
    <property type="evidence" value="ECO:0007669"/>
    <property type="project" value="TreeGrafter"/>
</dbReference>
<dbReference type="GO" id="GO:0046872">
    <property type="term" value="F:metal ion binding"/>
    <property type="evidence" value="ECO:0007669"/>
    <property type="project" value="UniProtKB-KW"/>
</dbReference>
<dbReference type="GO" id="GO:0004525">
    <property type="term" value="F:ribonuclease III activity"/>
    <property type="evidence" value="ECO:0007669"/>
    <property type="project" value="UniProtKB-UniRule"/>
</dbReference>
<dbReference type="GO" id="GO:0019843">
    <property type="term" value="F:rRNA binding"/>
    <property type="evidence" value="ECO:0007669"/>
    <property type="project" value="UniProtKB-KW"/>
</dbReference>
<dbReference type="GO" id="GO:0006397">
    <property type="term" value="P:mRNA processing"/>
    <property type="evidence" value="ECO:0007669"/>
    <property type="project" value="UniProtKB-UniRule"/>
</dbReference>
<dbReference type="GO" id="GO:0010468">
    <property type="term" value="P:regulation of gene expression"/>
    <property type="evidence" value="ECO:0007669"/>
    <property type="project" value="TreeGrafter"/>
</dbReference>
<dbReference type="GO" id="GO:0006364">
    <property type="term" value="P:rRNA processing"/>
    <property type="evidence" value="ECO:0007669"/>
    <property type="project" value="UniProtKB-UniRule"/>
</dbReference>
<dbReference type="GO" id="GO:0008033">
    <property type="term" value="P:tRNA processing"/>
    <property type="evidence" value="ECO:0007669"/>
    <property type="project" value="UniProtKB-KW"/>
</dbReference>
<dbReference type="CDD" id="cd10845">
    <property type="entry name" value="DSRM_RNAse_III_family"/>
    <property type="match status" value="1"/>
</dbReference>
<dbReference type="CDD" id="cd00593">
    <property type="entry name" value="RIBOc"/>
    <property type="match status" value="1"/>
</dbReference>
<dbReference type="FunFam" id="1.10.1520.10:FF:000001">
    <property type="entry name" value="Ribonuclease 3"/>
    <property type="match status" value="1"/>
</dbReference>
<dbReference type="FunFam" id="3.30.160.20:FF:000003">
    <property type="entry name" value="Ribonuclease 3"/>
    <property type="match status" value="1"/>
</dbReference>
<dbReference type="Gene3D" id="3.30.160.20">
    <property type="match status" value="1"/>
</dbReference>
<dbReference type="Gene3D" id="1.10.1520.10">
    <property type="entry name" value="Ribonuclease III domain"/>
    <property type="match status" value="1"/>
</dbReference>
<dbReference type="HAMAP" id="MF_00104">
    <property type="entry name" value="RNase_III"/>
    <property type="match status" value="1"/>
</dbReference>
<dbReference type="InterPro" id="IPR014720">
    <property type="entry name" value="dsRBD_dom"/>
</dbReference>
<dbReference type="InterPro" id="IPR011907">
    <property type="entry name" value="RNase_III"/>
</dbReference>
<dbReference type="InterPro" id="IPR000999">
    <property type="entry name" value="RNase_III_dom"/>
</dbReference>
<dbReference type="InterPro" id="IPR036389">
    <property type="entry name" value="RNase_III_sf"/>
</dbReference>
<dbReference type="NCBIfam" id="TIGR02191">
    <property type="entry name" value="RNaseIII"/>
    <property type="match status" value="1"/>
</dbReference>
<dbReference type="PANTHER" id="PTHR11207:SF0">
    <property type="entry name" value="RIBONUCLEASE 3"/>
    <property type="match status" value="1"/>
</dbReference>
<dbReference type="PANTHER" id="PTHR11207">
    <property type="entry name" value="RIBONUCLEASE III"/>
    <property type="match status" value="1"/>
</dbReference>
<dbReference type="Pfam" id="PF00035">
    <property type="entry name" value="dsrm"/>
    <property type="match status" value="1"/>
</dbReference>
<dbReference type="Pfam" id="PF14622">
    <property type="entry name" value="Ribonucleas_3_3"/>
    <property type="match status" value="1"/>
</dbReference>
<dbReference type="SMART" id="SM00358">
    <property type="entry name" value="DSRM"/>
    <property type="match status" value="1"/>
</dbReference>
<dbReference type="SMART" id="SM00535">
    <property type="entry name" value="RIBOc"/>
    <property type="match status" value="1"/>
</dbReference>
<dbReference type="SUPFAM" id="SSF54768">
    <property type="entry name" value="dsRNA-binding domain-like"/>
    <property type="match status" value="1"/>
</dbReference>
<dbReference type="SUPFAM" id="SSF69065">
    <property type="entry name" value="RNase III domain-like"/>
    <property type="match status" value="1"/>
</dbReference>
<dbReference type="PROSITE" id="PS50137">
    <property type="entry name" value="DS_RBD"/>
    <property type="match status" value="1"/>
</dbReference>
<dbReference type="PROSITE" id="PS00517">
    <property type="entry name" value="RNASE_3_1"/>
    <property type="match status" value="1"/>
</dbReference>
<dbReference type="PROSITE" id="PS50142">
    <property type="entry name" value="RNASE_3_2"/>
    <property type="match status" value="1"/>
</dbReference>
<gene>
    <name evidence="1" type="primary">rnc</name>
    <name type="ordered locus">EcSMS35_2720</name>
</gene>